<reference key="1">
    <citation type="journal article" date="2012" name="BMC Microbiol.">
        <title>Genome sequence of Desulfitobacterium hafniense DCB-2, a Gram-positive anaerobe capable of dehalogenation and metal reduction.</title>
        <authorList>
            <person name="Kim S.H."/>
            <person name="Harzman C."/>
            <person name="Davis J.K."/>
            <person name="Hutcheson R."/>
            <person name="Broderick J.B."/>
            <person name="Marsh T.L."/>
            <person name="Tiedje J.M."/>
        </authorList>
    </citation>
    <scope>NUCLEOTIDE SEQUENCE [LARGE SCALE GENOMIC DNA]</scope>
    <source>
        <strain>DSM 10664 / DCB-2</strain>
    </source>
</reference>
<evidence type="ECO:0000255" key="1">
    <source>
        <dbReference type="HAMAP-Rule" id="MF_00059"/>
    </source>
</evidence>
<proteinExistence type="inferred from homology"/>
<sequence>MLEIEKPKIECVERTDDNSYAKFVVEPLERGYGITLGNSLRRILLSSLPGTAVTSVKIEGVLHEFSTVPGVLEDVTDIILNLKSLALKGHTDEPKVLRLEAEGEGVIKAGDIITDADIEILNPDLKIATLDKDGRLFMEMTAERGRGYVSADKNKKPDQAIGIIPIDSIFAPIYKVNYTVEDTRVGMVTDYDKLTLEVWSNGSITPEEATSLAAKILSEHLRLFIGLTDKLNNVEIMVEKEEEAKDKILEMTIEDLDLSVRSYNCLKRAGINSVEELTQKTEEDMIKVRNLGRKSLEEVESKLKELGLGFRKADD</sequence>
<accession>B8G1Z4</accession>
<keyword id="KW-0240">DNA-directed RNA polymerase</keyword>
<keyword id="KW-0548">Nucleotidyltransferase</keyword>
<keyword id="KW-0804">Transcription</keyword>
<keyword id="KW-0808">Transferase</keyword>
<name>RPOA_DESHD</name>
<dbReference type="EC" id="2.7.7.6" evidence="1"/>
<dbReference type="EMBL" id="CP001336">
    <property type="protein sequence ID" value="ACL18517.1"/>
    <property type="molecule type" value="Genomic_DNA"/>
</dbReference>
<dbReference type="RefSeq" id="WP_005810110.1">
    <property type="nucleotide sequence ID" value="NC_011830.1"/>
</dbReference>
<dbReference type="SMR" id="B8G1Z4"/>
<dbReference type="KEGG" id="dhd:Dhaf_0450"/>
<dbReference type="HOGENOM" id="CLU_053084_0_1_9"/>
<dbReference type="Proteomes" id="UP000007726">
    <property type="component" value="Chromosome"/>
</dbReference>
<dbReference type="GO" id="GO:0005737">
    <property type="term" value="C:cytoplasm"/>
    <property type="evidence" value="ECO:0007669"/>
    <property type="project" value="UniProtKB-ARBA"/>
</dbReference>
<dbReference type="GO" id="GO:0000428">
    <property type="term" value="C:DNA-directed RNA polymerase complex"/>
    <property type="evidence" value="ECO:0007669"/>
    <property type="project" value="UniProtKB-KW"/>
</dbReference>
<dbReference type="GO" id="GO:0003677">
    <property type="term" value="F:DNA binding"/>
    <property type="evidence" value="ECO:0007669"/>
    <property type="project" value="UniProtKB-UniRule"/>
</dbReference>
<dbReference type="GO" id="GO:0003899">
    <property type="term" value="F:DNA-directed RNA polymerase activity"/>
    <property type="evidence" value="ECO:0007669"/>
    <property type="project" value="UniProtKB-UniRule"/>
</dbReference>
<dbReference type="GO" id="GO:0046983">
    <property type="term" value="F:protein dimerization activity"/>
    <property type="evidence" value="ECO:0007669"/>
    <property type="project" value="InterPro"/>
</dbReference>
<dbReference type="GO" id="GO:0006351">
    <property type="term" value="P:DNA-templated transcription"/>
    <property type="evidence" value="ECO:0007669"/>
    <property type="project" value="UniProtKB-UniRule"/>
</dbReference>
<dbReference type="CDD" id="cd06928">
    <property type="entry name" value="RNAP_alpha_NTD"/>
    <property type="match status" value="1"/>
</dbReference>
<dbReference type="FunFam" id="1.10.150.20:FF:000001">
    <property type="entry name" value="DNA-directed RNA polymerase subunit alpha"/>
    <property type="match status" value="1"/>
</dbReference>
<dbReference type="FunFam" id="2.170.120.12:FF:000001">
    <property type="entry name" value="DNA-directed RNA polymerase subunit alpha"/>
    <property type="match status" value="1"/>
</dbReference>
<dbReference type="Gene3D" id="1.10.150.20">
    <property type="entry name" value="5' to 3' exonuclease, C-terminal subdomain"/>
    <property type="match status" value="1"/>
</dbReference>
<dbReference type="Gene3D" id="2.170.120.12">
    <property type="entry name" value="DNA-directed RNA polymerase, insert domain"/>
    <property type="match status" value="1"/>
</dbReference>
<dbReference type="Gene3D" id="3.30.1360.10">
    <property type="entry name" value="RNA polymerase, RBP11-like subunit"/>
    <property type="match status" value="1"/>
</dbReference>
<dbReference type="HAMAP" id="MF_00059">
    <property type="entry name" value="RNApol_bact_RpoA"/>
    <property type="match status" value="1"/>
</dbReference>
<dbReference type="InterPro" id="IPR011262">
    <property type="entry name" value="DNA-dir_RNA_pol_insert"/>
</dbReference>
<dbReference type="InterPro" id="IPR011263">
    <property type="entry name" value="DNA-dir_RNA_pol_RpoA/D/Rpb3"/>
</dbReference>
<dbReference type="InterPro" id="IPR011773">
    <property type="entry name" value="DNA-dir_RpoA"/>
</dbReference>
<dbReference type="InterPro" id="IPR036603">
    <property type="entry name" value="RBP11-like"/>
</dbReference>
<dbReference type="InterPro" id="IPR011260">
    <property type="entry name" value="RNAP_asu_C"/>
</dbReference>
<dbReference type="InterPro" id="IPR036643">
    <property type="entry name" value="RNApol_insert_sf"/>
</dbReference>
<dbReference type="NCBIfam" id="NF003513">
    <property type="entry name" value="PRK05182.1-2"/>
    <property type="match status" value="1"/>
</dbReference>
<dbReference type="NCBIfam" id="NF003515">
    <property type="entry name" value="PRK05182.2-1"/>
    <property type="match status" value="1"/>
</dbReference>
<dbReference type="NCBIfam" id="NF003516">
    <property type="entry name" value="PRK05182.2-2"/>
    <property type="match status" value="1"/>
</dbReference>
<dbReference type="NCBIfam" id="NF003519">
    <property type="entry name" value="PRK05182.2-5"/>
    <property type="match status" value="1"/>
</dbReference>
<dbReference type="NCBIfam" id="TIGR02027">
    <property type="entry name" value="rpoA"/>
    <property type="match status" value="1"/>
</dbReference>
<dbReference type="Pfam" id="PF01000">
    <property type="entry name" value="RNA_pol_A_bac"/>
    <property type="match status" value="1"/>
</dbReference>
<dbReference type="Pfam" id="PF03118">
    <property type="entry name" value="RNA_pol_A_CTD"/>
    <property type="match status" value="1"/>
</dbReference>
<dbReference type="Pfam" id="PF01193">
    <property type="entry name" value="RNA_pol_L"/>
    <property type="match status" value="1"/>
</dbReference>
<dbReference type="SMART" id="SM00662">
    <property type="entry name" value="RPOLD"/>
    <property type="match status" value="1"/>
</dbReference>
<dbReference type="SUPFAM" id="SSF47789">
    <property type="entry name" value="C-terminal domain of RNA polymerase alpha subunit"/>
    <property type="match status" value="1"/>
</dbReference>
<dbReference type="SUPFAM" id="SSF56553">
    <property type="entry name" value="Insert subdomain of RNA polymerase alpha subunit"/>
    <property type="match status" value="1"/>
</dbReference>
<dbReference type="SUPFAM" id="SSF55257">
    <property type="entry name" value="RBP11-like subunits of RNA polymerase"/>
    <property type="match status" value="1"/>
</dbReference>
<organism>
    <name type="scientific">Desulfitobacterium hafniense (strain DSM 10664 / DCB-2)</name>
    <dbReference type="NCBI Taxonomy" id="272564"/>
    <lineage>
        <taxon>Bacteria</taxon>
        <taxon>Bacillati</taxon>
        <taxon>Bacillota</taxon>
        <taxon>Clostridia</taxon>
        <taxon>Eubacteriales</taxon>
        <taxon>Desulfitobacteriaceae</taxon>
        <taxon>Desulfitobacterium</taxon>
    </lineage>
</organism>
<protein>
    <recommendedName>
        <fullName evidence="1">DNA-directed RNA polymerase subunit alpha</fullName>
        <shortName evidence="1">RNAP subunit alpha</shortName>
        <ecNumber evidence="1">2.7.7.6</ecNumber>
    </recommendedName>
    <alternativeName>
        <fullName evidence="1">RNA polymerase subunit alpha</fullName>
    </alternativeName>
    <alternativeName>
        <fullName evidence="1">Transcriptase subunit alpha</fullName>
    </alternativeName>
</protein>
<comment type="function">
    <text evidence="1">DNA-dependent RNA polymerase catalyzes the transcription of DNA into RNA using the four ribonucleoside triphosphates as substrates.</text>
</comment>
<comment type="catalytic activity">
    <reaction evidence="1">
        <text>RNA(n) + a ribonucleoside 5'-triphosphate = RNA(n+1) + diphosphate</text>
        <dbReference type="Rhea" id="RHEA:21248"/>
        <dbReference type="Rhea" id="RHEA-COMP:14527"/>
        <dbReference type="Rhea" id="RHEA-COMP:17342"/>
        <dbReference type="ChEBI" id="CHEBI:33019"/>
        <dbReference type="ChEBI" id="CHEBI:61557"/>
        <dbReference type="ChEBI" id="CHEBI:140395"/>
        <dbReference type="EC" id="2.7.7.6"/>
    </reaction>
</comment>
<comment type="subunit">
    <text evidence="1">Homodimer. The RNAP catalytic core consists of 2 alpha, 1 beta, 1 beta' and 1 omega subunit. When a sigma factor is associated with the core the holoenzyme is formed, which can initiate transcription.</text>
</comment>
<comment type="domain">
    <text evidence="1">The N-terminal domain is essential for RNAP assembly and basal transcription, whereas the C-terminal domain is involved in interaction with transcriptional regulators and with upstream promoter elements.</text>
</comment>
<comment type="similarity">
    <text evidence="1">Belongs to the RNA polymerase alpha chain family.</text>
</comment>
<gene>
    <name evidence="1" type="primary">rpoA</name>
    <name type="ordered locus">Dhaf_0450</name>
</gene>
<feature type="chain" id="PRO_1000196633" description="DNA-directed RNA polymerase subunit alpha">
    <location>
        <begin position="1"/>
        <end position="315"/>
    </location>
</feature>
<feature type="region of interest" description="Alpha N-terminal domain (alpha-NTD)" evidence="1">
    <location>
        <begin position="1"/>
        <end position="228"/>
    </location>
</feature>
<feature type="region of interest" description="Alpha C-terminal domain (alpha-CTD)" evidence="1">
    <location>
        <begin position="245"/>
        <end position="315"/>
    </location>
</feature>